<evidence type="ECO:0000250" key="1"/>
<evidence type="ECO:0000250" key="2">
    <source>
        <dbReference type="UniProtKB" id="P40933"/>
    </source>
</evidence>
<evidence type="ECO:0000250" key="3">
    <source>
        <dbReference type="UniProtKB" id="P48346"/>
    </source>
</evidence>
<evidence type="ECO:0000255" key="4"/>
<evidence type="ECO:0000305" key="5"/>
<gene>
    <name type="primary">IL15</name>
</gene>
<proteinExistence type="evidence at transcript level"/>
<protein>
    <recommendedName>
        <fullName>Interleukin-15</fullName>
        <shortName>IL-15</shortName>
    </recommendedName>
</protein>
<dbReference type="EMBL" id="AJ891036">
    <property type="protein sequence ID" value="CAI94538.1"/>
    <property type="molecule type" value="mRNA"/>
</dbReference>
<dbReference type="EMBL" id="DQ083522">
    <property type="protein sequence ID" value="AAY83832.1"/>
    <property type="molecule type" value="mRNA"/>
</dbReference>
<dbReference type="SMR" id="Q4GZL1"/>
<dbReference type="GlyCosmos" id="Q4GZL1">
    <property type="glycosylation" value="3 sites, No reported glycans"/>
</dbReference>
<dbReference type="GO" id="GO:0005615">
    <property type="term" value="C:extracellular space"/>
    <property type="evidence" value="ECO:0007669"/>
    <property type="project" value="UniProtKB-KW"/>
</dbReference>
<dbReference type="GO" id="GO:0005125">
    <property type="term" value="F:cytokine activity"/>
    <property type="evidence" value="ECO:0007669"/>
    <property type="project" value="UniProtKB-KW"/>
</dbReference>
<dbReference type="GO" id="GO:0005126">
    <property type="term" value="F:cytokine receptor binding"/>
    <property type="evidence" value="ECO:0007669"/>
    <property type="project" value="InterPro"/>
</dbReference>
<dbReference type="GO" id="GO:0006955">
    <property type="term" value="P:immune response"/>
    <property type="evidence" value="ECO:0007669"/>
    <property type="project" value="InterPro"/>
</dbReference>
<dbReference type="GO" id="GO:0035723">
    <property type="term" value="P:interleukin-15-mediated signaling pathway"/>
    <property type="evidence" value="ECO:0000250"/>
    <property type="project" value="UniProtKB"/>
</dbReference>
<dbReference type="GO" id="GO:0042119">
    <property type="term" value="P:neutrophil activation"/>
    <property type="evidence" value="ECO:0000250"/>
    <property type="project" value="UniProtKB"/>
</dbReference>
<dbReference type="GO" id="GO:0001819">
    <property type="term" value="P:positive regulation of cytokine production"/>
    <property type="evidence" value="ECO:0007669"/>
    <property type="project" value="TreeGrafter"/>
</dbReference>
<dbReference type="GO" id="GO:0050778">
    <property type="term" value="P:positive regulation of immune response"/>
    <property type="evidence" value="ECO:0007669"/>
    <property type="project" value="TreeGrafter"/>
</dbReference>
<dbReference type="GO" id="GO:0050731">
    <property type="term" value="P:positive regulation of peptidyl-tyrosine phosphorylation"/>
    <property type="evidence" value="ECO:0000250"/>
    <property type="project" value="UniProtKB"/>
</dbReference>
<dbReference type="GO" id="GO:0050766">
    <property type="term" value="P:positive regulation of phagocytosis"/>
    <property type="evidence" value="ECO:0000250"/>
    <property type="project" value="UniProtKB"/>
</dbReference>
<dbReference type="GO" id="GO:0042102">
    <property type="term" value="P:positive regulation of T cell proliferation"/>
    <property type="evidence" value="ECO:0007669"/>
    <property type="project" value="TreeGrafter"/>
</dbReference>
<dbReference type="FunFam" id="1.20.1250.70:FF:000001">
    <property type="entry name" value="Interleukin"/>
    <property type="match status" value="1"/>
</dbReference>
<dbReference type="Gene3D" id="1.20.1250.70">
    <property type="entry name" value="Interleukin-15/Interleukin-21"/>
    <property type="match status" value="1"/>
</dbReference>
<dbReference type="InterPro" id="IPR009079">
    <property type="entry name" value="4_helix_cytokine-like_core"/>
</dbReference>
<dbReference type="InterPro" id="IPR020439">
    <property type="entry name" value="IL-15"/>
</dbReference>
<dbReference type="InterPro" id="IPR003443">
    <property type="entry name" value="IL-15/IL-21_fam"/>
</dbReference>
<dbReference type="InterPro" id="IPR020466">
    <property type="entry name" value="IL-15_mml"/>
</dbReference>
<dbReference type="PANTHER" id="PTHR14356:SF3">
    <property type="entry name" value="INTERLEUKIN-15"/>
    <property type="match status" value="1"/>
</dbReference>
<dbReference type="PANTHER" id="PTHR14356">
    <property type="entry name" value="INTERLEUKIN-15-RELATED"/>
    <property type="match status" value="1"/>
</dbReference>
<dbReference type="Pfam" id="PF02372">
    <property type="entry name" value="IL15"/>
    <property type="match status" value="1"/>
</dbReference>
<dbReference type="PRINTS" id="PR01947">
    <property type="entry name" value="INTLKN15MAML"/>
</dbReference>
<dbReference type="PRINTS" id="PR01930">
    <property type="entry name" value="INTRLEUKIN15"/>
</dbReference>
<dbReference type="SUPFAM" id="SSF47266">
    <property type="entry name" value="4-helical cytokines"/>
    <property type="match status" value="1"/>
</dbReference>
<comment type="function">
    <text evidence="2 3">Cytokine that plays a major role in the development of inflammatory and protective immune responses to microbial invaders and parasites by modulating immune cells of both the innate and adaptive immune systems. Stimulates the proliferation of natural killer cells, T-cells and B-cells and promotes the secretion of several cytokines. In monocytes, induces the production of IL8 and monocyte chemotactic protein 1/CCL2, two chemokines that attract neutrophils and monocytes respectively to sites of infection. Unlike most cytokines, which are secreted in soluble form, IL15 is expressed in association with its high affinity IL15RA on the surface of IL15-producing cells and delivers signals to target cells that express IL2RB and IL2RG receptor subunits. Binding to its receptor triggers the phosphorylation of JAK1 and JAK3 and the recruitment and subsequent phosphorylation of signal transducer and activator of transcription-3/STAT3 and STAT5 (By similarity). In mast cells, induces the rapid tyrosine phosphorylation of STAT6 and thereby controls mast cell survival and release of cytokines such as IL4 (By similarity).</text>
</comment>
<comment type="subcellular location">
    <subcellularLocation>
        <location evidence="1">Secreted</location>
    </subcellularLocation>
</comment>
<comment type="similarity">
    <text evidence="5">Belongs to the IL-15/IL-21 family.</text>
</comment>
<organism>
    <name type="scientific">Bubalus bubalis</name>
    <name type="common">Domestic water buffalo</name>
    <dbReference type="NCBI Taxonomy" id="89462"/>
    <lineage>
        <taxon>Eukaryota</taxon>
        <taxon>Metazoa</taxon>
        <taxon>Chordata</taxon>
        <taxon>Craniata</taxon>
        <taxon>Vertebrata</taxon>
        <taxon>Euteleostomi</taxon>
        <taxon>Mammalia</taxon>
        <taxon>Eutheria</taxon>
        <taxon>Laurasiatheria</taxon>
        <taxon>Artiodactyla</taxon>
        <taxon>Ruminantia</taxon>
        <taxon>Pecora</taxon>
        <taxon>Bovidae</taxon>
        <taxon>Bovinae</taxon>
        <taxon>Bubalus</taxon>
    </lineage>
</organism>
<name>IL15_BUBBU</name>
<accession>Q4GZL1</accession>
<reference key="1">
    <citation type="submission" date="2005-03" db="EMBL/GenBank/DDBJ databases">
        <title>Cloning and sequencing of interleukin-15 gene of Bubalus bubalis.</title>
        <authorList>
            <person name="Tiwari M."/>
            <person name="Ahsan Z."/>
            <person name="Srivastava J."/>
            <person name="Pathak D."/>
            <person name="Ali S."/>
            <person name="Garg L.C."/>
        </authorList>
    </citation>
    <scope>NUCLEOTIDE SEQUENCE [MRNA]</scope>
    <source>
        <tissue>Spleen</tissue>
    </source>
</reference>
<reference key="2">
    <citation type="submission" date="2005-06" db="EMBL/GenBank/DDBJ databases">
        <authorList>
            <person name="Tiwari M."/>
            <person name="Ahsan Z."/>
            <person name="Pathak D."/>
            <person name="Srivastava J."/>
            <person name="Ali S."/>
            <person name="Garg L.C."/>
        </authorList>
    </citation>
    <scope>NUCLEOTIDE SEQUENCE [MRNA]</scope>
</reference>
<keyword id="KW-0202">Cytokine</keyword>
<keyword id="KW-1015">Disulfide bond</keyword>
<keyword id="KW-0325">Glycoprotein</keyword>
<keyword id="KW-0964">Secreted</keyword>
<keyword id="KW-0732">Signal</keyword>
<sequence length="162" mass="18465">MRILKPYLRSTSIQCYLCLLLNSHFLTEAGIHVFILGCISAGLPKTEANWQYVINDLKTIEHLIQSIHMDATLYTEGDAHPNCKVTAMQCFLLELRVILHESKNAAIYEIIENLTMLANSNLSSIENKTELGCKECEELEEKSIKEFLKSFVHIVKMFINTS</sequence>
<feature type="signal peptide" evidence="4">
    <location>
        <begin position="1"/>
        <end position="29"/>
    </location>
</feature>
<feature type="propeptide" id="PRO_0000233183" evidence="4">
    <location>
        <begin position="30"/>
        <end position="48"/>
    </location>
</feature>
<feature type="chain" id="PRO_0000233184" description="Interleukin-15">
    <location>
        <begin position="49"/>
        <end position="162"/>
    </location>
</feature>
<feature type="glycosylation site" description="N-linked (GlcNAc...) asparagine" evidence="4">
    <location>
        <position position="113"/>
    </location>
</feature>
<feature type="glycosylation site" description="N-linked (GlcNAc...) asparagine" evidence="4">
    <location>
        <position position="121"/>
    </location>
</feature>
<feature type="glycosylation site" description="N-linked (GlcNAc...) asparagine" evidence="4">
    <location>
        <position position="127"/>
    </location>
</feature>
<feature type="disulfide bond" evidence="1">
    <location>
        <begin position="83"/>
        <end position="133"/>
    </location>
</feature>
<feature type="disulfide bond" evidence="1">
    <location>
        <begin position="90"/>
        <end position="136"/>
    </location>
</feature>